<accession>B1JHA2</accession>
<protein>
    <recommendedName>
        <fullName evidence="1">Trans-aconitate 2-methyltransferase</fullName>
        <ecNumber evidence="1">2.1.1.144</ecNumber>
    </recommendedName>
</protein>
<gene>
    <name evidence="1" type="primary">tam</name>
    <name type="ordered locus">YPK_1603</name>
</gene>
<evidence type="ECO:0000255" key="1">
    <source>
        <dbReference type="HAMAP-Rule" id="MF_00560"/>
    </source>
</evidence>
<name>TAM_YERPY</name>
<keyword id="KW-0963">Cytoplasm</keyword>
<keyword id="KW-0489">Methyltransferase</keyword>
<keyword id="KW-0949">S-adenosyl-L-methionine</keyword>
<keyword id="KW-0808">Transferase</keyword>
<sequence>MQDWDPDLYRQFEAERTRPATDLLAHITITSPQFISDLGCGPGNSTELLHRRFPDAQLVGIDHSQAMLASAQQRLPHCTFIEADIHQWRPSQPQNLIYANASLQWLTDHPHLFPSLLSQLAPRGVLAVQMPDNLDQPSHRAMREVAENGPWQQTLQEAGATRAKVLSANHYYDLLAPHAERVDIWRTTYYHPMPSAQAIVDWLRATGLRPYLAPLTEAMQLAFLQNYLAIIDKAYPARTDGRRLLAFPRLFIVAHAQR</sequence>
<comment type="function">
    <text evidence="1">Catalyzes the S-adenosylmethionine monomethyl esterification of trans-aconitate.</text>
</comment>
<comment type="catalytic activity">
    <reaction evidence="1">
        <text>trans-aconitate + S-adenosyl-L-methionine = (E)-3-(methoxycarbonyl)pent-2-enedioate + S-adenosyl-L-homocysteine</text>
        <dbReference type="Rhea" id="RHEA:14969"/>
        <dbReference type="ChEBI" id="CHEBI:15708"/>
        <dbReference type="ChEBI" id="CHEBI:57470"/>
        <dbReference type="ChEBI" id="CHEBI:57856"/>
        <dbReference type="ChEBI" id="CHEBI:59789"/>
        <dbReference type="EC" id="2.1.1.144"/>
    </reaction>
</comment>
<comment type="subcellular location">
    <subcellularLocation>
        <location evidence="1">Cytoplasm</location>
    </subcellularLocation>
</comment>
<comment type="similarity">
    <text evidence="1">Belongs to the methyltransferase superfamily. Tam family.</text>
</comment>
<reference key="1">
    <citation type="submission" date="2008-02" db="EMBL/GenBank/DDBJ databases">
        <title>Complete sequence of Yersinia pseudotuberculosis YPIII.</title>
        <authorList>
            <consortium name="US DOE Joint Genome Institute"/>
            <person name="Copeland A."/>
            <person name="Lucas S."/>
            <person name="Lapidus A."/>
            <person name="Glavina del Rio T."/>
            <person name="Dalin E."/>
            <person name="Tice H."/>
            <person name="Bruce D."/>
            <person name="Goodwin L."/>
            <person name="Pitluck S."/>
            <person name="Munk A.C."/>
            <person name="Brettin T."/>
            <person name="Detter J.C."/>
            <person name="Han C."/>
            <person name="Tapia R."/>
            <person name="Schmutz J."/>
            <person name="Larimer F."/>
            <person name="Land M."/>
            <person name="Hauser L."/>
            <person name="Challacombe J.F."/>
            <person name="Green L."/>
            <person name="Lindler L.E."/>
            <person name="Nikolich M.P."/>
            <person name="Richardson P."/>
        </authorList>
    </citation>
    <scope>NUCLEOTIDE SEQUENCE [LARGE SCALE GENOMIC DNA]</scope>
    <source>
        <strain>YPIII</strain>
    </source>
</reference>
<organism>
    <name type="scientific">Yersinia pseudotuberculosis serotype O:3 (strain YPIII)</name>
    <dbReference type="NCBI Taxonomy" id="502800"/>
    <lineage>
        <taxon>Bacteria</taxon>
        <taxon>Pseudomonadati</taxon>
        <taxon>Pseudomonadota</taxon>
        <taxon>Gammaproteobacteria</taxon>
        <taxon>Enterobacterales</taxon>
        <taxon>Yersiniaceae</taxon>
        <taxon>Yersinia</taxon>
    </lineage>
</organism>
<feature type="chain" id="PRO_1000129269" description="Trans-aconitate 2-methyltransferase">
    <location>
        <begin position="1"/>
        <end position="258"/>
    </location>
</feature>
<proteinExistence type="inferred from homology"/>
<dbReference type="EC" id="2.1.1.144" evidence="1"/>
<dbReference type="EMBL" id="CP000950">
    <property type="protein sequence ID" value="ACA67896.1"/>
    <property type="molecule type" value="Genomic_DNA"/>
</dbReference>
<dbReference type="RefSeq" id="WP_002210232.1">
    <property type="nucleotide sequence ID" value="NZ_CP009792.1"/>
</dbReference>
<dbReference type="SMR" id="B1JHA2"/>
<dbReference type="GeneID" id="57976176"/>
<dbReference type="KEGG" id="ypy:YPK_1603"/>
<dbReference type="PATRIC" id="fig|502800.11.peg.2254"/>
<dbReference type="GO" id="GO:0005737">
    <property type="term" value="C:cytoplasm"/>
    <property type="evidence" value="ECO:0007669"/>
    <property type="project" value="UniProtKB-SubCell"/>
</dbReference>
<dbReference type="GO" id="GO:0030798">
    <property type="term" value="F:trans-aconitate 2-methyltransferase activity"/>
    <property type="evidence" value="ECO:0007669"/>
    <property type="project" value="UniProtKB-UniRule"/>
</dbReference>
<dbReference type="GO" id="GO:0032259">
    <property type="term" value="P:methylation"/>
    <property type="evidence" value="ECO:0007669"/>
    <property type="project" value="UniProtKB-KW"/>
</dbReference>
<dbReference type="CDD" id="cd02440">
    <property type="entry name" value="AdoMet_MTases"/>
    <property type="match status" value="1"/>
</dbReference>
<dbReference type="Gene3D" id="1.10.150.290">
    <property type="entry name" value="S-adenosyl-L-methionine-dependent methyltransferases"/>
    <property type="match status" value="1"/>
</dbReference>
<dbReference type="Gene3D" id="3.40.50.150">
    <property type="entry name" value="Vaccinia Virus protein VP39"/>
    <property type="match status" value="1"/>
</dbReference>
<dbReference type="HAMAP" id="MF_00560">
    <property type="entry name" value="Tran_acon_Me_trans"/>
    <property type="match status" value="1"/>
</dbReference>
<dbReference type="InterPro" id="IPR041698">
    <property type="entry name" value="Methyltransf_25"/>
</dbReference>
<dbReference type="InterPro" id="IPR029063">
    <property type="entry name" value="SAM-dependent_MTases_sf"/>
</dbReference>
<dbReference type="InterPro" id="IPR023506">
    <property type="entry name" value="Trans-aconitate_MeTrfase"/>
</dbReference>
<dbReference type="InterPro" id="IPR023149">
    <property type="entry name" value="Trans_acon_MeTrfase_C"/>
</dbReference>
<dbReference type="NCBIfam" id="NF002463">
    <property type="entry name" value="PRK01683.1"/>
    <property type="match status" value="1"/>
</dbReference>
<dbReference type="PANTHER" id="PTHR43861:SF1">
    <property type="entry name" value="TRANS-ACONITATE 2-METHYLTRANSFERASE"/>
    <property type="match status" value="1"/>
</dbReference>
<dbReference type="PANTHER" id="PTHR43861">
    <property type="entry name" value="TRANS-ACONITATE 2-METHYLTRANSFERASE-RELATED"/>
    <property type="match status" value="1"/>
</dbReference>
<dbReference type="Pfam" id="PF13649">
    <property type="entry name" value="Methyltransf_25"/>
    <property type="match status" value="1"/>
</dbReference>
<dbReference type="SUPFAM" id="SSF53335">
    <property type="entry name" value="S-adenosyl-L-methionine-dependent methyltransferases"/>
    <property type="match status" value="1"/>
</dbReference>